<name>LPXK_RICTY</name>
<feature type="chain" id="PRO_0000190948" description="Tetraacyldisaccharide 4'-kinase">
    <location>
        <begin position="1"/>
        <end position="321"/>
    </location>
</feature>
<feature type="binding site" evidence="1">
    <location>
        <begin position="54"/>
        <end position="61"/>
    </location>
    <ligand>
        <name>ATP</name>
        <dbReference type="ChEBI" id="CHEBI:30616"/>
    </ligand>
</feature>
<sequence length="321" mass="36434">MIKLLYPQFWQERNIIAYLLLPISLIYQFLSYLRTSLACPVILPAKVICVGNCSVGGTGKTQIVIYLAKLLKAKNVSFVIITKAYGSNIKSTTIIQKWHTALEVGDEGIMLAKYGTAIAAKHIKDILPLINELKPDVIIVDDFLQNPYLHKDFTIVSVDSQRLFGNRFLIPAGPLRQNPKQVLDAADLIFLVSSNQDQIPNELTPYIDKVINAQIVPSNNIDKTKNYFAFSGIGNPQRFFLTLENYRLNIVGHKTFPDHYNYLQADLENLYSLAKEHNAILITTRKDYVKFNYLNNKIICLDVELSINNPDLLNEKIFKKA</sequence>
<protein>
    <recommendedName>
        <fullName evidence="1">Tetraacyldisaccharide 4'-kinase</fullName>
        <ecNumber evidence="1">2.7.1.130</ecNumber>
    </recommendedName>
    <alternativeName>
        <fullName evidence="1">Lipid A 4'-kinase</fullName>
    </alternativeName>
</protein>
<gene>
    <name evidence="1" type="primary">lpxK</name>
    <name type="ordered locus">RT0705</name>
</gene>
<dbReference type="EC" id="2.7.1.130" evidence="1"/>
<dbReference type="EMBL" id="AJ293328">
    <property type="protein sequence ID" value="CAC33763.1"/>
    <property type="molecule type" value="Genomic_DNA"/>
</dbReference>
<dbReference type="EMBL" id="AE017197">
    <property type="protein sequence ID" value="AAU04164.1"/>
    <property type="molecule type" value="Genomic_DNA"/>
</dbReference>
<dbReference type="RefSeq" id="WP_011191141.1">
    <property type="nucleotide sequence ID" value="NC_006142.1"/>
</dbReference>
<dbReference type="SMR" id="P58188"/>
<dbReference type="KEGG" id="rty:RT0705"/>
<dbReference type="eggNOG" id="COG1663">
    <property type="taxonomic scope" value="Bacteria"/>
</dbReference>
<dbReference type="HOGENOM" id="CLU_038816_0_0_5"/>
<dbReference type="OrthoDB" id="9766423at2"/>
<dbReference type="UniPathway" id="UPA00359">
    <property type="reaction ID" value="UER00482"/>
</dbReference>
<dbReference type="Proteomes" id="UP000000604">
    <property type="component" value="Chromosome"/>
</dbReference>
<dbReference type="GO" id="GO:0005886">
    <property type="term" value="C:plasma membrane"/>
    <property type="evidence" value="ECO:0007669"/>
    <property type="project" value="TreeGrafter"/>
</dbReference>
<dbReference type="GO" id="GO:0005524">
    <property type="term" value="F:ATP binding"/>
    <property type="evidence" value="ECO:0007669"/>
    <property type="project" value="UniProtKB-UniRule"/>
</dbReference>
<dbReference type="GO" id="GO:0009029">
    <property type="term" value="F:tetraacyldisaccharide 4'-kinase activity"/>
    <property type="evidence" value="ECO:0007669"/>
    <property type="project" value="UniProtKB-UniRule"/>
</dbReference>
<dbReference type="GO" id="GO:0009245">
    <property type="term" value="P:lipid A biosynthetic process"/>
    <property type="evidence" value="ECO:0007669"/>
    <property type="project" value="UniProtKB-UniRule"/>
</dbReference>
<dbReference type="GO" id="GO:0009244">
    <property type="term" value="P:lipopolysaccharide core region biosynthetic process"/>
    <property type="evidence" value="ECO:0007669"/>
    <property type="project" value="TreeGrafter"/>
</dbReference>
<dbReference type="HAMAP" id="MF_00409">
    <property type="entry name" value="LpxK"/>
    <property type="match status" value="1"/>
</dbReference>
<dbReference type="InterPro" id="IPR003758">
    <property type="entry name" value="LpxK"/>
</dbReference>
<dbReference type="InterPro" id="IPR027417">
    <property type="entry name" value="P-loop_NTPase"/>
</dbReference>
<dbReference type="NCBIfam" id="TIGR00682">
    <property type="entry name" value="lpxK"/>
    <property type="match status" value="1"/>
</dbReference>
<dbReference type="PANTHER" id="PTHR42724">
    <property type="entry name" value="TETRAACYLDISACCHARIDE 4'-KINASE"/>
    <property type="match status" value="1"/>
</dbReference>
<dbReference type="PANTHER" id="PTHR42724:SF1">
    <property type="entry name" value="TETRAACYLDISACCHARIDE 4'-KINASE, MITOCHONDRIAL-RELATED"/>
    <property type="match status" value="1"/>
</dbReference>
<dbReference type="Pfam" id="PF02606">
    <property type="entry name" value="LpxK"/>
    <property type="match status" value="1"/>
</dbReference>
<dbReference type="SUPFAM" id="SSF52540">
    <property type="entry name" value="P-loop containing nucleoside triphosphate hydrolases"/>
    <property type="match status" value="1"/>
</dbReference>
<comment type="function">
    <text evidence="1">Transfers the gamma-phosphate of ATP to the 4'-position of a tetraacyldisaccharide 1-phosphate intermediate (termed DS-1-P) to form tetraacyldisaccharide 1,4'-bis-phosphate (lipid IVA).</text>
</comment>
<comment type="catalytic activity">
    <reaction evidence="1">
        <text>a lipid A disaccharide + ATP = a lipid IVA + ADP + H(+)</text>
        <dbReference type="Rhea" id="RHEA:67840"/>
        <dbReference type="ChEBI" id="CHEBI:15378"/>
        <dbReference type="ChEBI" id="CHEBI:30616"/>
        <dbReference type="ChEBI" id="CHEBI:176343"/>
        <dbReference type="ChEBI" id="CHEBI:176425"/>
        <dbReference type="ChEBI" id="CHEBI:456216"/>
        <dbReference type="EC" id="2.7.1.130"/>
    </reaction>
</comment>
<comment type="pathway">
    <text evidence="1">Glycolipid biosynthesis; lipid IV(A) biosynthesis; lipid IV(A) from (3R)-3-hydroxytetradecanoyl-[acyl-carrier-protein] and UDP-N-acetyl-alpha-D-glucosamine: step 6/6.</text>
</comment>
<comment type="similarity">
    <text evidence="1">Belongs to the LpxK family.</text>
</comment>
<accession>P58188</accession>
<keyword id="KW-0067">ATP-binding</keyword>
<keyword id="KW-0418">Kinase</keyword>
<keyword id="KW-0441">Lipid A biosynthesis</keyword>
<keyword id="KW-0444">Lipid biosynthesis</keyword>
<keyword id="KW-0443">Lipid metabolism</keyword>
<keyword id="KW-0547">Nucleotide-binding</keyword>
<keyword id="KW-0808">Transferase</keyword>
<reference key="1">
    <citation type="journal article" date="2001" name="Mol. Biol. Evol.">
        <title>Pseudogenes, junk DNA, and the dynamics of Rickettsia genomes.</title>
        <authorList>
            <person name="Andersson J.O."/>
            <person name="Andersson S.G.E."/>
        </authorList>
    </citation>
    <scope>NUCLEOTIDE SEQUENCE [GENOMIC DNA]</scope>
    <source>
        <strain>ATCC VR-144 / Wilmington</strain>
    </source>
</reference>
<reference key="2">
    <citation type="journal article" date="2004" name="J. Bacteriol.">
        <title>Complete genome sequence of Rickettsia typhi and comparison with sequences of other Rickettsiae.</title>
        <authorList>
            <person name="McLeod M.P."/>
            <person name="Qin X."/>
            <person name="Karpathy S.E."/>
            <person name="Gioia J."/>
            <person name="Highlander S.K."/>
            <person name="Fox G.E."/>
            <person name="McNeill T.Z."/>
            <person name="Jiang H."/>
            <person name="Muzny D."/>
            <person name="Jacob L.S."/>
            <person name="Hawes A.C."/>
            <person name="Sodergren E."/>
            <person name="Gill R."/>
            <person name="Hume J."/>
            <person name="Morgan M."/>
            <person name="Fan G."/>
            <person name="Amin A.G."/>
            <person name="Gibbs R.A."/>
            <person name="Hong C."/>
            <person name="Yu X.-J."/>
            <person name="Walker D.H."/>
            <person name="Weinstock G.M."/>
        </authorList>
    </citation>
    <scope>NUCLEOTIDE SEQUENCE [LARGE SCALE GENOMIC DNA]</scope>
    <source>
        <strain>ATCC VR-144 / Wilmington</strain>
    </source>
</reference>
<evidence type="ECO:0000255" key="1">
    <source>
        <dbReference type="HAMAP-Rule" id="MF_00409"/>
    </source>
</evidence>
<organism>
    <name type="scientific">Rickettsia typhi (strain ATCC VR-144 / Wilmington)</name>
    <dbReference type="NCBI Taxonomy" id="257363"/>
    <lineage>
        <taxon>Bacteria</taxon>
        <taxon>Pseudomonadati</taxon>
        <taxon>Pseudomonadota</taxon>
        <taxon>Alphaproteobacteria</taxon>
        <taxon>Rickettsiales</taxon>
        <taxon>Rickettsiaceae</taxon>
        <taxon>Rickettsieae</taxon>
        <taxon>Rickettsia</taxon>
        <taxon>typhus group</taxon>
    </lineage>
</organism>
<proteinExistence type="inferred from homology"/>